<name>TNPE_STAAU</name>
<accession>P37375</accession>
<comment type="similarity">
    <text evidence="3">Belongs to the 'phage' integrase family.</text>
</comment>
<organism>
    <name type="scientific">Staphylococcus aureus</name>
    <dbReference type="NCBI Taxonomy" id="1280"/>
    <lineage>
        <taxon>Bacteria</taxon>
        <taxon>Bacillati</taxon>
        <taxon>Bacillota</taxon>
        <taxon>Bacilli</taxon>
        <taxon>Bacillales</taxon>
        <taxon>Staphylococcaceae</taxon>
        <taxon>Staphylococcus</taxon>
    </lineage>
</organism>
<proteinExistence type="inferred from homology"/>
<reference key="1">
    <citation type="submission" date="1993-02" db="EMBL/GenBank/DDBJ databases">
        <title>PsiTn554: a Staphylococcus aureus chromosomal element encoding cadmium resistance determinants, and genes resembling the transposases genes of Tn554.</title>
        <authorList>
            <person name="Chikramane S.G."/>
            <person name="Dubin D.T."/>
        </authorList>
    </citation>
    <scope>NUCLEOTIDE SEQUENCE [GENOMIC DNA]</scope>
    <source>
        <transposon>PsiTn554</transposon>
    </source>
</reference>
<gene>
    <name type="primary">tnpB</name>
</gene>
<protein>
    <recommendedName>
        <fullName>Transposase B from transposon PsiTn554</fullName>
    </recommendedName>
</protein>
<dbReference type="EMBL" id="L10909">
    <property type="protein sequence ID" value="AAA26607.1"/>
    <property type="molecule type" value="Genomic_DNA"/>
</dbReference>
<dbReference type="SMR" id="P37375"/>
<dbReference type="GO" id="GO:0003677">
    <property type="term" value="F:DNA binding"/>
    <property type="evidence" value="ECO:0007669"/>
    <property type="project" value="UniProtKB-KW"/>
</dbReference>
<dbReference type="GO" id="GO:0015074">
    <property type="term" value="P:DNA integration"/>
    <property type="evidence" value="ECO:0007669"/>
    <property type="project" value="UniProtKB-KW"/>
</dbReference>
<dbReference type="GO" id="GO:0006310">
    <property type="term" value="P:DNA recombination"/>
    <property type="evidence" value="ECO:0007669"/>
    <property type="project" value="UniProtKB-KW"/>
</dbReference>
<dbReference type="CDD" id="cd01187">
    <property type="entry name" value="INT_tnpB_C_Tn554"/>
    <property type="match status" value="1"/>
</dbReference>
<dbReference type="Gene3D" id="1.10.150.130">
    <property type="match status" value="1"/>
</dbReference>
<dbReference type="Gene3D" id="1.10.443.10">
    <property type="entry name" value="Intergrase catalytic core"/>
    <property type="match status" value="1"/>
</dbReference>
<dbReference type="InterPro" id="IPR044068">
    <property type="entry name" value="CB"/>
</dbReference>
<dbReference type="InterPro" id="IPR011010">
    <property type="entry name" value="DNA_brk_join_enz"/>
</dbReference>
<dbReference type="InterPro" id="IPR013762">
    <property type="entry name" value="Integrase-like_cat_sf"/>
</dbReference>
<dbReference type="InterPro" id="IPR002104">
    <property type="entry name" value="Integrase_catalytic"/>
</dbReference>
<dbReference type="InterPro" id="IPR010998">
    <property type="entry name" value="Integrase_recombinase_N"/>
</dbReference>
<dbReference type="InterPro" id="IPR050090">
    <property type="entry name" value="Tyrosine_recombinase_XerCD"/>
</dbReference>
<dbReference type="PANTHER" id="PTHR30349">
    <property type="entry name" value="PHAGE INTEGRASE-RELATED"/>
    <property type="match status" value="1"/>
</dbReference>
<dbReference type="Pfam" id="PF00589">
    <property type="entry name" value="Phage_integrase"/>
    <property type="match status" value="1"/>
</dbReference>
<dbReference type="SUPFAM" id="SSF56349">
    <property type="entry name" value="DNA breaking-rejoining enzymes"/>
    <property type="match status" value="1"/>
</dbReference>
<dbReference type="PROSITE" id="PS51900">
    <property type="entry name" value="CB"/>
    <property type="match status" value="1"/>
</dbReference>
<dbReference type="PROSITE" id="PS51898">
    <property type="entry name" value="TYR_RECOMBINASE"/>
    <property type="match status" value="1"/>
</dbReference>
<keyword id="KW-0229">DNA integration</keyword>
<keyword id="KW-0233">DNA recombination</keyword>
<keyword id="KW-0238">DNA-binding</keyword>
<keyword id="KW-0814">Transposable element</keyword>
<sequence>MNASSKRKIISQSEISKKIAVMNEEMQGFWANNSWDIRKCPHPSAIELSKNPALRNRWVRFERVKNLWLRTELKYFYFYHLNNGIWNAKTVWIRKGTVINKMLDFLDLKYPSITSITEVPIDKAMTEYRTYLTKQGVRITTTNYKITANQEKTPVKANSYYVTNLKQFIEFIEDFYFDGEEWDKDVWDRRNLPLPDDKVNPTQYEYTINFKGFRNTYFKQLVKRYCKLRLNMDSFSYVSDIAQKLKEFFNFLDIKFKHVQRVHQLTRVEIEAYLSELNMMGIKPSTITGRISILEGLFSTLHRLEWDDVPSKLLIYPEDYPKIPRAKPRFIDEFVLEQLNSHLDKLPEYIATMTMIVQECGMRISELCTLKKGCLLEDKDGYYFLKYYQWKMKKEHIVPISKEVVLLIKVREDKVSEEFPDSEYLFPRKDGSPLKQETFRGELNKLAYEQNIVDKLGEIYRFHAHAFRHSVGTRTINNGVPQHIVQKFLGHESPEMTSRYAHIFDETLKNEFTKFQEKLVTNNGDVLNLDDDSEVDDVELQWFKKNINAQVLPNGYCRLPVIAGGCPHANACLDCTHFCTSKQFLPQHEEQLERTEELLTIAKDKQWQRQIETNSRVKERLEQIIGSLTG</sequence>
<feature type="chain" id="PRO_0000197556" description="Transposase B from transposon PsiTn554">
    <location>
        <begin position="1"/>
        <end position="630"/>
    </location>
</feature>
<feature type="domain" description="Core-binding (CB)" evidence="2">
    <location>
        <begin position="216"/>
        <end position="302"/>
    </location>
</feature>
<feature type="domain" description="Tyr recombinase" evidence="1">
    <location>
        <begin position="326"/>
        <end position="513"/>
    </location>
</feature>
<feature type="active site" evidence="1">
    <location>
        <position position="363"/>
    </location>
</feature>
<feature type="active site" evidence="1">
    <location>
        <position position="391"/>
    </location>
</feature>
<feature type="active site" evidence="1">
    <location>
        <position position="465"/>
    </location>
</feature>
<feature type="active site" evidence="1">
    <location>
        <position position="468"/>
    </location>
</feature>
<feature type="active site" evidence="1">
    <location>
        <position position="491"/>
    </location>
</feature>
<feature type="active site" description="O-(3'-phospho-DNA)-tyrosine intermediate" evidence="1">
    <location>
        <position position="500"/>
    </location>
</feature>
<evidence type="ECO:0000255" key="1">
    <source>
        <dbReference type="PROSITE-ProRule" id="PRU01246"/>
    </source>
</evidence>
<evidence type="ECO:0000255" key="2">
    <source>
        <dbReference type="PROSITE-ProRule" id="PRU01248"/>
    </source>
</evidence>
<evidence type="ECO:0000305" key="3"/>